<keyword id="KW-0256">Endoplasmic reticulum</keyword>
<keyword id="KW-0275">Fatty acid biosynthesis</keyword>
<keyword id="KW-0276">Fatty acid metabolism</keyword>
<keyword id="KW-0444">Lipid biosynthesis</keyword>
<keyword id="KW-0443">Lipid metabolism</keyword>
<keyword id="KW-0472">Membrane</keyword>
<keyword id="KW-0479">Metal-binding</keyword>
<keyword id="KW-0560">Oxidoreductase</keyword>
<keyword id="KW-1185">Reference proteome</keyword>
<keyword id="KW-0812">Transmembrane</keyword>
<keyword id="KW-1133">Transmembrane helix</keyword>
<keyword id="KW-0862">Zinc</keyword>
<feature type="chain" id="PRO_0000419656" description="Dihydroceramide fatty acyl 2-hydroxylase FAH1">
    <location>
        <begin position="1"/>
        <end position="237"/>
    </location>
</feature>
<feature type="transmembrane region" description="Helical" evidence="2">
    <location>
        <begin position="50"/>
        <end position="70"/>
    </location>
</feature>
<feature type="transmembrane region" description="Helical" evidence="2">
    <location>
        <begin position="80"/>
        <end position="100"/>
    </location>
</feature>
<feature type="transmembrane region" description="Helical" evidence="2">
    <location>
        <begin position="137"/>
        <end position="157"/>
    </location>
</feature>
<feature type="transmembrane region" description="Helical" evidence="2">
    <location>
        <begin position="164"/>
        <end position="184"/>
    </location>
</feature>
<feature type="binding site" evidence="1">
    <location>
        <position position="102"/>
    </location>
    <ligand>
        <name>Zn(2+)</name>
        <dbReference type="ChEBI" id="CHEBI:29105"/>
        <label>1</label>
    </ligand>
</feature>
<feature type="binding site" evidence="1">
    <location>
        <position position="107"/>
    </location>
    <ligand>
        <name>Zn(2+)</name>
        <dbReference type="ChEBI" id="CHEBI:29105"/>
        <label>1</label>
    </ligand>
</feature>
<feature type="binding site" evidence="1">
    <location>
        <position position="123"/>
    </location>
    <ligand>
        <name>Zn(2+)</name>
        <dbReference type="ChEBI" id="CHEBI:29105"/>
        <label>1</label>
    </ligand>
</feature>
<feature type="binding site" evidence="1">
    <location>
        <position position="126"/>
    </location>
    <ligand>
        <name>Zn(2+)</name>
        <dbReference type="ChEBI" id="CHEBI:29105"/>
        <label>2</label>
    </ligand>
</feature>
<feature type="binding site" evidence="1">
    <location>
        <position position="127"/>
    </location>
    <ligand>
        <name>Zn(2+)</name>
        <dbReference type="ChEBI" id="CHEBI:29105"/>
        <label>1</label>
    </ligand>
</feature>
<feature type="binding site" evidence="1">
    <location>
        <position position="181"/>
    </location>
    <ligand>
        <name>Zn(2+)</name>
        <dbReference type="ChEBI" id="CHEBI:29105"/>
        <label>2</label>
    </ligand>
</feature>
<feature type="binding site" evidence="1">
    <location>
        <position position="185"/>
    </location>
    <ligand>
        <name>Zn(2+)</name>
        <dbReference type="ChEBI" id="CHEBI:29105"/>
        <label>2</label>
    </ligand>
</feature>
<feature type="binding site" evidence="1">
    <location>
        <position position="201"/>
    </location>
    <ligand>
        <name>Zn(2+)</name>
        <dbReference type="ChEBI" id="CHEBI:29105"/>
        <label>2</label>
    </ligand>
</feature>
<feature type="binding site" evidence="1">
    <location>
        <position position="204"/>
    </location>
    <ligand>
        <name>Zn(2+)</name>
        <dbReference type="ChEBI" id="CHEBI:29105"/>
        <label>1</label>
    </ligand>
</feature>
<feature type="binding site" evidence="1">
    <location>
        <position position="205"/>
    </location>
    <ligand>
        <name>Zn(2+)</name>
        <dbReference type="ChEBI" id="CHEBI:29105"/>
        <label>2</label>
    </ligand>
</feature>
<name>FAH1_ARATH</name>
<proteinExistence type="evidence at protein level"/>
<reference key="1">
    <citation type="journal article" date="1997" name="J. Biol. Chem.">
        <title>Fah1p, a Saccharomyces cerevisiae cytochrome b5 fusion protein, and its Arabidopsis thaliana homolog that lacks the cytochrome b5 domain both function in the alpha-hydroxylation of sphingolipid-associated very long chain fatty acids.</title>
        <authorList>
            <person name="Mitchell A.G."/>
            <person name="Martin C.E."/>
        </authorList>
    </citation>
    <scope>NUCLEOTIDE SEQUENCE [MRNA]</scope>
    <scope>FUNCTION</scope>
</reference>
<reference key="2">
    <citation type="journal article" date="1999" name="Nature">
        <title>Sequence and analysis of chromosome 2 of the plant Arabidopsis thaliana.</title>
        <authorList>
            <person name="Lin X."/>
            <person name="Kaul S."/>
            <person name="Rounsley S.D."/>
            <person name="Shea T.P."/>
            <person name="Benito M.-I."/>
            <person name="Town C.D."/>
            <person name="Fujii C.Y."/>
            <person name="Mason T.M."/>
            <person name="Bowman C.L."/>
            <person name="Barnstead M.E."/>
            <person name="Feldblyum T.V."/>
            <person name="Buell C.R."/>
            <person name="Ketchum K.A."/>
            <person name="Lee J.J."/>
            <person name="Ronning C.M."/>
            <person name="Koo H.L."/>
            <person name="Moffat K.S."/>
            <person name="Cronin L.A."/>
            <person name="Shen M."/>
            <person name="Pai G."/>
            <person name="Van Aken S."/>
            <person name="Umayam L."/>
            <person name="Tallon L.J."/>
            <person name="Gill J.E."/>
            <person name="Adams M.D."/>
            <person name="Carrera A.J."/>
            <person name="Creasy T.H."/>
            <person name="Goodman H.M."/>
            <person name="Somerville C.R."/>
            <person name="Copenhaver G.P."/>
            <person name="Preuss D."/>
            <person name="Nierman W.C."/>
            <person name="White O."/>
            <person name="Eisen J.A."/>
            <person name="Salzberg S.L."/>
            <person name="Fraser C.M."/>
            <person name="Venter J.C."/>
        </authorList>
    </citation>
    <scope>NUCLEOTIDE SEQUENCE [LARGE SCALE GENOMIC DNA]</scope>
    <source>
        <strain>cv. Columbia</strain>
    </source>
</reference>
<reference key="3">
    <citation type="journal article" date="2017" name="Plant J.">
        <title>Araport11: a complete reannotation of the Arabidopsis thaliana reference genome.</title>
        <authorList>
            <person name="Cheng C.Y."/>
            <person name="Krishnakumar V."/>
            <person name="Chan A.P."/>
            <person name="Thibaud-Nissen F."/>
            <person name="Schobel S."/>
            <person name="Town C.D."/>
        </authorList>
    </citation>
    <scope>GENOME REANNOTATION</scope>
    <source>
        <strain>cv. Columbia</strain>
    </source>
</reference>
<reference key="4">
    <citation type="journal article" date="2003" name="Science">
        <title>Empirical analysis of transcriptional activity in the Arabidopsis genome.</title>
        <authorList>
            <person name="Yamada K."/>
            <person name="Lim J."/>
            <person name="Dale J.M."/>
            <person name="Chen H."/>
            <person name="Shinn P."/>
            <person name="Palm C.J."/>
            <person name="Southwick A.M."/>
            <person name="Wu H.C."/>
            <person name="Kim C.J."/>
            <person name="Nguyen M."/>
            <person name="Pham P.K."/>
            <person name="Cheuk R.F."/>
            <person name="Karlin-Newmann G."/>
            <person name="Liu S.X."/>
            <person name="Lam B."/>
            <person name="Sakano H."/>
            <person name="Wu T."/>
            <person name="Yu G."/>
            <person name="Miranda M."/>
            <person name="Quach H.L."/>
            <person name="Tripp M."/>
            <person name="Chang C.H."/>
            <person name="Lee J.M."/>
            <person name="Toriumi M.J."/>
            <person name="Chan M.M."/>
            <person name="Tang C.C."/>
            <person name="Onodera C.S."/>
            <person name="Deng J.M."/>
            <person name="Akiyama K."/>
            <person name="Ansari Y."/>
            <person name="Arakawa T."/>
            <person name="Banh J."/>
            <person name="Banno F."/>
            <person name="Bowser L."/>
            <person name="Brooks S.Y."/>
            <person name="Carninci P."/>
            <person name="Chao Q."/>
            <person name="Choy N."/>
            <person name="Enju A."/>
            <person name="Goldsmith A.D."/>
            <person name="Gurjal M."/>
            <person name="Hansen N.F."/>
            <person name="Hayashizaki Y."/>
            <person name="Johnson-Hopson C."/>
            <person name="Hsuan V.W."/>
            <person name="Iida K."/>
            <person name="Karnes M."/>
            <person name="Khan S."/>
            <person name="Koesema E."/>
            <person name="Ishida J."/>
            <person name="Jiang P.X."/>
            <person name="Jones T."/>
            <person name="Kawai J."/>
            <person name="Kamiya A."/>
            <person name="Meyers C."/>
            <person name="Nakajima M."/>
            <person name="Narusaka M."/>
            <person name="Seki M."/>
            <person name="Sakurai T."/>
            <person name="Satou M."/>
            <person name="Tamse R."/>
            <person name="Vaysberg M."/>
            <person name="Wallender E.K."/>
            <person name="Wong C."/>
            <person name="Yamamura Y."/>
            <person name="Yuan S."/>
            <person name="Shinozaki K."/>
            <person name="Davis R.W."/>
            <person name="Theologis A."/>
            <person name="Ecker J.R."/>
        </authorList>
    </citation>
    <scope>NUCLEOTIDE SEQUENCE [LARGE SCALE MRNA]</scope>
    <source>
        <strain>cv. Columbia</strain>
    </source>
</reference>
<reference key="5">
    <citation type="journal article" date="2009" name="Plant J.">
        <title>Functional association of cell death suppressor, Arabidopsis Bax inhibitor-1, with fatty acid 2-hydroxylation through cytochrome b(5).</title>
        <authorList>
            <person name="Nagano M."/>
            <person name="Ihara-Ohori Y."/>
            <person name="Imai H."/>
            <person name="Inada N."/>
            <person name="Fujimoto M."/>
            <person name="Tsutsumi N."/>
            <person name="Uchimiya H."/>
            <person name="Kawai-Yamada M."/>
        </authorList>
    </citation>
    <scope>INTERACTION WITH CYTB5-A; CYTB5-B; CYTB5-C AND CYTB5-D</scope>
</reference>
<reference key="6">
    <citation type="journal article" date="2012" name="Plant Physiol.">
        <title>Arabidopsis sphingolipid fatty acid 2-hydroxylases (AtFAH1 and AtFAH2) are functionally differentiated in fatty acid 2-hydroxylation and stress responses.</title>
        <authorList>
            <person name="Nagano M."/>
            <person name="Takahara K."/>
            <person name="Fujimoto M."/>
            <person name="Tsutsumi N."/>
            <person name="Uchimiya H."/>
            <person name="Kawai-Yamada M."/>
        </authorList>
    </citation>
    <scope>FUNCTION</scope>
    <scope>CATALYTIC ACTIVITY</scope>
    <scope>SUBCELLULAR LOCATION</scope>
    <scope>INTERACTION WITH CYTB5-D</scope>
    <scope>INDUCTION BY H(2)O(2)</scope>
    <source>
        <strain>cv. Columbia</strain>
    </source>
</reference>
<reference key="7">
    <citation type="journal article" date="2012" name="Plant Signal. Behav.">
        <title>Plant sphingolipid fatty acid 2-hydroxylases have unique characters unlike their animal and fungus counterparts.</title>
        <authorList>
            <person name="Nagano M."/>
            <person name="Uchimiya H."/>
            <person name="Kawai-Yamada M."/>
        </authorList>
    </citation>
    <scope>TISSUE SPECIFICITY</scope>
</reference>
<sequence>MVAQGFTVDLKKPLVFQVGHLGEDYEEWVHQPIATKEGPRFFQSDFWEFLTLTVWWAVPVIWLPVVVWCISRSVSMGCSLPEIVPIVVMGIFIWTFFEYVLHRFVFHIKTKSYWGNTAHYLIHGCHHKHPMDHLRLVFPPTATAILCFPFWNIAKAISTPSTAPALFGGGMLGYVMYDVTHYYLHHAQPTRPVTKNLKKYHLNHHFRIQDKGFGITSSLWDIVFGTLPTTKAPRKEQ</sequence>
<dbReference type="EC" id="1.14.18.7" evidence="4"/>
<dbReference type="EMBL" id="AF021804">
    <property type="protein sequence ID" value="AAB94072.1"/>
    <property type="molecule type" value="mRNA"/>
</dbReference>
<dbReference type="EMBL" id="AC003096">
    <property type="protein sequence ID" value="AAC16270.1"/>
    <property type="molecule type" value="Genomic_DNA"/>
</dbReference>
<dbReference type="EMBL" id="CP002685">
    <property type="protein sequence ID" value="AEC09019.1"/>
    <property type="molecule type" value="Genomic_DNA"/>
</dbReference>
<dbReference type="EMBL" id="AY050326">
    <property type="protein sequence ID" value="AAK91343.1"/>
    <property type="molecule type" value="mRNA"/>
</dbReference>
<dbReference type="EMBL" id="BT000482">
    <property type="protein sequence ID" value="AAN18051.1"/>
    <property type="molecule type" value="mRNA"/>
</dbReference>
<dbReference type="PIR" id="T01359">
    <property type="entry name" value="T01359"/>
</dbReference>
<dbReference type="RefSeq" id="NP_181023.1">
    <property type="nucleotide sequence ID" value="NM_129030.2"/>
</dbReference>
<dbReference type="SMR" id="O48916"/>
<dbReference type="BioGRID" id="3388">
    <property type="interactions" value="1"/>
</dbReference>
<dbReference type="FunCoup" id="O48916">
    <property type="interactions" value="455"/>
</dbReference>
<dbReference type="IntAct" id="O48916">
    <property type="interactions" value="1"/>
</dbReference>
<dbReference type="STRING" id="3702.O48916"/>
<dbReference type="PaxDb" id="3702-AT2G34770.1"/>
<dbReference type="ProteomicsDB" id="230954"/>
<dbReference type="EnsemblPlants" id="AT2G34770.1">
    <property type="protein sequence ID" value="AT2G34770.1"/>
    <property type="gene ID" value="AT2G34770"/>
</dbReference>
<dbReference type="GeneID" id="818042"/>
<dbReference type="Gramene" id="AT2G34770.1">
    <property type="protein sequence ID" value="AT2G34770.1"/>
    <property type="gene ID" value="AT2G34770"/>
</dbReference>
<dbReference type="KEGG" id="ath:AT2G34770"/>
<dbReference type="Araport" id="AT2G34770"/>
<dbReference type="TAIR" id="AT2G34770">
    <property type="gene designation" value="FAH1"/>
</dbReference>
<dbReference type="eggNOG" id="KOG0539">
    <property type="taxonomic scope" value="Eukaryota"/>
</dbReference>
<dbReference type="HOGENOM" id="CLU_034756_1_0_1"/>
<dbReference type="InParanoid" id="O48916"/>
<dbReference type="OMA" id="HDYPKDK"/>
<dbReference type="OrthoDB" id="260519at2759"/>
<dbReference type="PhylomeDB" id="O48916"/>
<dbReference type="BioCyc" id="ARA:AT2G34770-MONOMER"/>
<dbReference type="BioCyc" id="MetaCyc:AT2G34770-MONOMER"/>
<dbReference type="BRENDA" id="1.14.18.7">
    <property type="organism ID" value="399"/>
</dbReference>
<dbReference type="PRO" id="PR:O48916"/>
<dbReference type="Proteomes" id="UP000006548">
    <property type="component" value="Chromosome 2"/>
</dbReference>
<dbReference type="ExpressionAtlas" id="O48916">
    <property type="expression patterns" value="baseline and differential"/>
</dbReference>
<dbReference type="GO" id="GO:0005789">
    <property type="term" value="C:endoplasmic reticulum membrane"/>
    <property type="evidence" value="ECO:0007669"/>
    <property type="project" value="UniProtKB-SubCell"/>
</dbReference>
<dbReference type="GO" id="GO:0102771">
    <property type="term" value="F:dihydroceramide fatty acyl 2-hydroxylase activity"/>
    <property type="evidence" value="ECO:0007669"/>
    <property type="project" value="UniProtKB-EC"/>
</dbReference>
<dbReference type="GO" id="GO:0005506">
    <property type="term" value="F:iron ion binding"/>
    <property type="evidence" value="ECO:0007669"/>
    <property type="project" value="InterPro"/>
</dbReference>
<dbReference type="GO" id="GO:0006633">
    <property type="term" value="P:fatty acid biosynthetic process"/>
    <property type="evidence" value="ECO:0007669"/>
    <property type="project" value="UniProtKB-KW"/>
</dbReference>
<dbReference type="GO" id="GO:0000038">
    <property type="term" value="P:very long-chain fatty acid metabolic process"/>
    <property type="evidence" value="ECO:0000314"/>
    <property type="project" value="TAIR"/>
</dbReference>
<dbReference type="InterPro" id="IPR006694">
    <property type="entry name" value="Fatty_acid_hydroxylase"/>
</dbReference>
<dbReference type="InterPro" id="IPR014430">
    <property type="entry name" value="Scs7"/>
</dbReference>
<dbReference type="PANTHER" id="PTHR12863:SF1">
    <property type="entry name" value="FATTY ACID 2-HYDROXYLASE"/>
    <property type="match status" value="1"/>
</dbReference>
<dbReference type="PANTHER" id="PTHR12863">
    <property type="entry name" value="FATTY ACID HYDROXYLASE"/>
    <property type="match status" value="1"/>
</dbReference>
<dbReference type="Pfam" id="PF04116">
    <property type="entry name" value="FA_hydroxylase"/>
    <property type="match status" value="1"/>
</dbReference>
<gene>
    <name evidence="7" type="primary">FAH1</name>
    <name evidence="9" type="ordered locus">At2g34770</name>
    <name evidence="10" type="ORF">T29F13.2</name>
</gene>
<protein>
    <recommendedName>
        <fullName evidence="8">Dihydroceramide fatty acyl 2-hydroxylase FAH1</fullName>
        <ecNumber evidence="4">1.14.18.7</ecNumber>
    </recommendedName>
    <alternativeName>
        <fullName evidence="7">Fatty acid 2-hydroxylase 1</fullName>
        <shortName evidence="7">AtFAH1</shortName>
    </alternativeName>
</protein>
<comment type="function">
    <text evidence="4 6">Fatty acid 2-hydroxylase involved in the alpha-hydroxylation of sphingolipid-associated very long-chain fatty acids (VLCFA). Probably involved in the resistance response to oxidative stress.</text>
</comment>
<comment type="catalytic activity">
    <reaction evidence="4">
        <text>an N-(1,2-saturated acyl)sphinganine + 2 Fe(II)-[cytochrome b5] + O2 + 2 H(+) = an N-[(2'R)-hydroxyacyl]sphinganine + 2 Fe(III)-[cytochrome b5] + H2O</text>
        <dbReference type="Rhea" id="RHEA:46512"/>
        <dbReference type="Rhea" id="RHEA-COMP:10438"/>
        <dbReference type="Rhea" id="RHEA-COMP:10439"/>
        <dbReference type="ChEBI" id="CHEBI:15377"/>
        <dbReference type="ChEBI" id="CHEBI:15378"/>
        <dbReference type="ChEBI" id="CHEBI:15379"/>
        <dbReference type="ChEBI" id="CHEBI:29033"/>
        <dbReference type="ChEBI" id="CHEBI:29034"/>
        <dbReference type="ChEBI" id="CHEBI:86265"/>
        <dbReference type="ChEBI" id="CHEBI:86266"/>
        <dbReference type="EC" id="1.14.18.7"/>
    </reaction>
</comment>
<comment type="cofactor">
    <cofactor evidence="1">
        <name>Zn(2+)</name>
        <dbReference type="ChEBI" id="CHEBI:29105"/>
    </cofactor>
    <text evidence="1">Binds 2 Zn(2+) ions per subunit that likely form a catalytic dimetal center.</text>
</comment>
<comment type="subunit">
    <text evidence="3 4">Interacts with CYTB5-A, CYTB5-B, CYTB5-C and CYTB5-D. Interacts indirectly with BI-1 via CYTB5-D.</text>
</comment>
<comment type="subcellular location">
    <subcellularLocation>
        <location evidence="4">Endoplasmic reticulum membrane</location>
        <topology evidence="4">Multi-pass membrane protein</topology>
    </subcellularLocation>
</comment>
<comment type="tissue specificity">
    <text evidence="5">Expressed in leaves, roots, flowers and seeds.</text>
</comment>
<comment type="induction">
    <text evidence="4">Up-regulated by H(2)O(2) treatment.</text>
</comment>
<comment type="similarity">
    <text evidence="8">Belongs to the sterol desaturase family.</text>
</comment>
<accession>O48916</accession>
<evidence type="ECO:0000250" key="1">
    <source>
        <dbReference type="UniProtKB" id="Q03529"/>
    </source>
</evidence>
<evidence type="ECO:0000255" key="2"/>
<evidence type="ECO:0000269" key="3">
    <source>
    </source>
</evidence>
<evidence type="ECO:0000269" key="4">
    <source>
    </source>
</evidence>
<evidence type="ECO:0000269" key="5">
    <source>
    </source>
</evidence>
<evidence type="ECO:0000269" key="6">
    <source>
    </source>
</evidence>
<evidence type="ECO:0000303" key="7">
    <source>
    </source>
</evidence>
<evidence type="ECO:0000305" key="8"/>
<evidence type="ECO:0000312" key="9">
    <source>
        <dbReference type="Araport" id="AT2G34770"/>
    </source>
</evidence>
<evidence type="ECO:0000312" key="10">
    <source>
        <dbReference type="EMBL" id="AAC16270.1"/>
    </source>
</evidence>
<organism>
    <name type="scientific">Arabidopsis thaliana</name>
    <name type="common">Mouse-ear cress</name>
    <dbReference type="NCBI Taxonomy" id="3702"/>
    <lineage>
        <taxon>Eukaryota</taxon>
        <taxon>Viridiplantae</taxon>
        <taxon>Streptophyta</taxon>
        <taxon>Embryophyta</taxon>
        <taxon>Tracheophyta</taxon>
        <taxon>Spermatophyta</taxon>
        <taxon>Magnoliopsida</taxon>
        <taxon>eudicotyledons</taxon>
        <taxon>Gunneridae</taxon>
        <taxon>Pentapetalae</taxon>
        <taxon>rosids</taxon>
        <taxon>malvids</taxon>
        <taxon>Brassicales</taxon>
        <taxon>Brassicaceae</taxon>
        <taxon>Camelineae</taxon>
        <taxon>Arabidopsis</taxon>
    </lineage>
</organism>